<dbReference type="EMBL" id="Y08501">
    <property type="protein sequence ID" value="CAA69734.1"/>
    <property type="molecule type" value="Genomic_DNA"/>
</dbReference>
<dbReference type="EMBL" id="BK010421">
    <property type="status" value="NOT_ANNOTATED_CDS"/>
    <property type="molecule type" value="Genomic_DNA"/>
</dbReference>
<dbReference type="EMBL" id="AC007729">
    <property type="protein sequence ID" value="AAM15490.1"/>
    <property type="molecule type" value="Genomic_DNA"/>
</dbReference>
<dbReference type="EMBL" id="CP002685">
    <property type="protein sequence ID" value="AEC06096.1"/>
    <property type="molecule type" value="Genomic_DNA"/>
</dbReference>
<dbReference type="EMBL" id="AY231406">
    <property type="protein sequence ID" value="AAO86834.1"/>
    <property type="molecule type" value="mRNA"/>
</dbReference>
<dbReference type="RefSeq" id="NP_085510.1">
    <property type="nucleotide sequence ID" value="NC_001284.2"/>
</dbReference>
<dbReference type="RefSeq" id="NP_178794.1">
    <property type="nucleotide sequence ID" value="NM_126752.4"/>
</dbReference>
<dbReference type="STRING" id="3702.P93305"/>
<dbReference type="PaxDb" id="3702-AT2G07708.1"/>
<dbReference type="EnsemblPlants" id="AT2G07708.1">
    <property type="protein sequence ID" value="AT2G07708.1"/>
    <property type="gene ID" value="AT2G07708"/>
</dbReference>
<dbReference type="EnsemblPlants" id="ATMG00500.1">
    <property type="protein sequence ID" value="ATMG00500.1"/>
    <property type="gene ID" value="ATMG00500"/>
</dbReference>
<dbReference type="GeneID" id="815383"/>
<dbReference type="Gramene" id="AT2G07708.1">
    <property type="protein sequence ID" value="AT2G07708.1"/>
    <property type="gene ID" value="AT2G07708"/>
</dbReference>
<dbReference type="Gramene" id="ATMG00500.1">
    <property type="protein sequence ID" value="ATMG00500.1"/>
    <property type="gene ID" value="ATMG00500"/>
</dbReference>
<dbReference type="KEGG" id="ath:AT2G07708"/>
<dbReference type="Araport" id="AT2G07708"/>
<dbReference type="Araport" id="ATMG00500"/>
<dbReference type="TAIR" id="AT2G07708"/>
<dbReference type="TAIR" id="ATMG00500">
    <property type="gene designation" value="ORF141"/>
</dbReference>
<dbReference type="HOGENOM" id="CLU_1827961_0_0_1"/>
<dbReference type="InParanoid" id="P93305"/>
<dbReference type="PRO" id="PR:P93305"/>
<dbReference type="Proteomes" id="UP000006548">
    <property type="component" value="Chromosome 2"/>
</dbReference>
<dbReference type="Proteomes" id="UP000006548">
    <property type="component" value="Mitochondrion MT"/>
</dbReference>
<dbReference type="ExpressionAtlas" id="P93305">
    <property type="expression patterns" value="baseline"/>
</dbReference>
<dbReference type="GO" id="GO:0005739">
    <property type="term" value="C:mitochondrion"/>
    <property type="evidence" value="ECO:0007669"/>
    <property type="project" value="UniProtKB-SubCell"/>
</dbReference>
<proteinExistence type="evidence at transcript level"/>
<feature type="chain" id="PRO_0000196774" description="Uncharacterized mitochondrial protein AtMg00500">
    <location>
        <begin position="1"/>
        <end position="141"/>
    </location>
</feature>
<name>M500_ARATH</name>
<protein>
    <recommendedName>
        <fullName>Uncharacterized mitochondrial protein AtMg00500</fullName>
    </recommendedName>
    <alternativeName>
        <fullName>ORF141</fullName>
    </alternativeName>
</protein>
<accession>P93305</accession>
<sequence>MRQNMSILPPSSFSRNFLLVRCSPIQVWKYSMNTLCTMHGWMKLYLEYQRWNCMLRLSASIELEVFMDVPIFIRTYYRPANMDDSFRYGIIFRMYDLAVQLQWGNVMKLLLVTKTQVEKKKALNLNVSKTRDGRGGLNQQG</sequence>
<organism>
    <name type="scientific">Arabidopsis thaliana</name>
    <name type="common">Mouse-ear cress</name>
    <dbReference type="NCBI Taxonomy" id="3702"/>
    <lineage>
        <taxon>Eukaryota</taxon>
        <taxon>Viridiplantae</taxon>
        <taxon>Streptophyta</taxon>
        <taxon>Embryophyta</taxon>
        <taxon>Tracheophyta</taxon>
        <taxon>Spermatophyta</taxon>
        <taxon>Magnoliopsida</taxon>
        <taxon>eudicotyledons</taxon>
        <taxon>Gunneridae</taxon>
        <taxon>Pentapetalae</taxon>
        <taxon>rosids</taxon>
        <taxon>malvids</taxon>
        <taxon>Brassicales</taxon>
        <taxon>Brassicaceae</taxon>
        <taxon>Camelineae</taxon>
        <taxon>Arabidopsis</taxon>
    </lineage>
</organism>
<keyword id="KW-0496">Mitochondrion</keyword>
<keyword id="KW-1185">Reference proteome</keyword>
<gene>
    <name evidence="3" type="ordered locus">AtMg00500</name>
</gene>
<gene>
    <name evidence="2" type="ordered locus">At2g07708</name>
</gene>
<evidence type="ECO:0000305" key="1"/>
<evidence type="ECO:0000312" key="2">
    <source>
        <dbReference type="Araport" id="AT2G07708"/>
    </source>
</evidence>
<evidence type="ECO:0000312" key="3">
    <source>
        <dbReference type="Araport" id="ATMG00500"/>
    </source>
</evidence>
<reference key="1">
    <citation type="journal article" date="1997" name="Nat. Genet.">
        <title>The mitochondrial genome of Arabidopsis thaliana contains 57 genes in 366,924 nucleotides.</title>
        <authorList>
            <person name="Unseld M."/>
            <person name="Marienfeld J.R."/>
            <person name="Brandt P."/>
            <person name="Brennicke A."/>
        </authorList>
    </citation>
    <scope>NUCLEOTIDE SEQUENCE [LARGE SCALE GENOMIC DNA]</scope>
    <source>
        <strain>cv. C24</strain>
    </source>
</reference>
<reference key="2">
    <citation type="journal article" date="2018" name="Plant Cell">
        <title>Correction of persistent errors in Arabidopsis reference mitochondrial genomes.</title>
        <authorList>
            <person name="Sloan D.B."/>
            <person name="Wu Z."/>
            <person name="Sharbrough J."/>
        </authorList>
    </citation>
    <scope>NUCLEOTIDE SEQUENCE [LARGE SCALE GENOMIC DNA]</scope>
    <source>
        <strain>cv. Columbia</strain>
    </source>
</reference>
<reference key="3">
    <citation type="journal article" date="1999" name="Nature">
        <title>Sequence and analysis of chromosome 2 of the plant Arabidopsis thaliana.</title>
        <authorList>
            <person name="Lin X."/>
            <person name="Kaul S."/>
            <person name="Rounsley S.D."/>
            <person name="Shea T.P."/>
            <person name="Benito M.-I."/>
            <person name="Town C.D."/>
            <person name="Fujii C.Y."/>
            <person name="Mason T.M."/>
            <person name="Bowman C.L."/>
            <person name="Barnstead M.E."/>
            <person name="Feldblyum T.V."/>
            <person name="Buell C.R."/>
            <person name="Ketchum K.A."/>
            <person name="Lee J.J."/>
            <person name="Ronning C.M."/>
            <person name="Koo H.L."/>
            <person name="Moffat K.S."/>
            <person name="Cronin L.A."/>
            <person name="Shen M."/>
            <person name="Pai G."/>
            <person name="Van Aken S."/>
            <person name="Umayam L."/>
            <person name="Tallon L.J."/>
            <person name="Gill J.E."/>
            <person name="Adams M.D."/>
            <person name="Carrera A.J."/>
            <person name="Creasy T.H."/>
            <person name="Goodman H.M."/>
            <person name="Somerville C.R."/>
            <person name="Copenhaver G.P."/>
            <person name="Preuss D."/>
            <person name="Nierman W.C."/>
            <person name="White O."/>
            <person name="Eisen J.A."/>
            <person name="Salzberg S.L."/>
            <person name="Fraser C.M."/>
            <person name="Venter J.C."/>
        </authorList>
    </citation>
    <scope>NUCLEOTIDE SEQUENCE [LARGE SCALE GENOMIC DNA] (AT2G07708)</scope>
    <source>
        <strain>cv. Columbia</strain>
    </source>
</reference>
<reference key="4">
    <citation type="journal article" date="2017" name="Plant J.">
        <title>Araport11: a complete reannotation of the Arabidopsis thaliana reference genome.</title>
        <authorList>
            <person name="Cheng C.Y."/>
            <person name="Krishnakumar V."/>
            <person name="Chan A.P."/>
            <person name="Thibaud-Nissen F."/>
            <person name="Schobel S."/>
            <person name="Town C.D."/>
        </authorList>
    </citation>
    <scope>GENOME REANNOTATION (AT2G07708)</scope>
    <source>
        <strain>cv. Columbia</strain>
    </source>
</reference>
<reference key="5">
    <citation type="journal article" date="2005" name="Plant Physiol.">
        <title>Analysis of the cDNAs of hypothetical genes on Arabidopsis chromosome 2 reveals numerous transcript variants.</title>
        <authorList>
            <person name="Xiao Y.-L."/>
            <person name="Smith S.R."/>
            <person name="Ishmael N."/>
            <person name="Redman J.C."/>
            <person name="Kumar N."/>
            <person name="Monaghan E.L."/>
            <person name="Ayele M."/>
            <person name="Haas B.J."/>
            <person name="Wu H.C."/>
            <person name="Town C.D."/>
        </authorList>
    </citation>
    <scope>NUCLEOTIDE SEQUENCE [LARGE SCALE MRNA] (AT2G07708)</scope>
    <source>
        <strain>cv. Columbia</strain>
    </source>
</reference>
<geneLocation type="mitochondrion"/>
<comment type="subcellular location">
    <subcellularLocation>
        <location evidence="1">Mitochondrion</location>
    </subcellularLocation>
</comment>
<comment type="miscellaneous">
    <text>A stretch of 270 kb of the mitochondrial genome is duplicated within the centromere of chromosome 2 resulting in the duplication of the gene. The expression of this duplicated gene (At2g07708) is demonstrated.</text>
</comment>